<feature type="chain" id="PRO_0000379509" description="Putative aldehyde dehydrogenase DhaS">
    <location>
        <begin position="1"/>
        <end position="495"/>
    </location>
</feature>
<feature type="active site" evidence="2">
    <location>
        <position position="266"/>
    </location>
</feature>
<feature type="active site" evidence="2">
    <location>
        <position position="300"/>
    </location>
</feature>
<feature type="binding site" evidence="1">
    <location>
        <begin position="244"/>
        <end position="249"/>
    </location>
    <ligand>
        <name>NAD(+)</name>
        <dbReference type="ChEBI" id="CHEBI:57540"/>
    </ligand>
</feature>
<protein>
    <recommendedName>
        <fullName evidence="2">Putative aldehyde dehydrogenase DhaS</fullName>
        <ecNumber evidence="2">1.2.1.3</ecNumber>
    </recommendedName>
</protein>
<name>ALDH4_BACSU</name>
<evidence type="ECO:0000255" key="1"/>
<evidence type="ECO:0000255" key="2">
    <source>
        <dbReference type="PROSITE-ProRule" id="PRU10007"/>
    </source>
</evidence>
<evidence type="ECO:0000269" key="3">
    <source>
    </source>
</evidence>
<evidence type="ECO:0000305" key="4"/>
<reference key="1">
    <citation type="submission" date="1997-10" db="EMBL/GenBank/DDBJ databases">
        <title>Sequence analysis of the Bacillus subtilis chromosome region between the terC and odhAB loci cloned in a yeast artificial chromosome.</title>
        <authorList>
            <person name="Lapidus A."/>
            <person name="Galleron N."/>
            <person name="Sorokin A."/>
            <person name="Ehrlich D."/>
        </authorList>
    </citation>
    <scope>NUCLEOTIDE SEQUENCE [GENOMIC DNA]</scope>
</reference>
<reference key="2">
    <citation type="journal article" date="1997" name="Nature">
        <title>The complete genome sequence of the Gram-positive bacterium Bacillus subtilis.</title>
        <authorList>
            <person name="Kunst F."/>
            <person name="Ogasawara N."/>
            <person name="Moszer I."/>
            <person name="Albertini A.M."/>
            <person name="Alloni G."/>
            <person name="Azevedo V."/>
            <person name="Bertero M.G."/>
            <person name="Bessieres P."/>
            <person name="Bolotin A."/>
            <person name="Borchert S."/>
            <person name="Borriss R."/>
            <person name="Boursier L."/>
            <person name="Brans A."/>
            <person name="Braun M."/>
            <person name="Brignell S.C."/>
            <person name="Bron S."/>
            <person name="Brouillet S."/>
            <person name="Bruschi C.V."/>
            <person name="Caldwell B."/>
            <person name="Capuano V."/>
            <person name="Carter N.M."/>
            <person name="Choi S.-K."/>
            <person name="Codani J.-J."/>
            <person name="Connerton I.F."/>
            <person name="Cummings N.J."/>
            <person name="Daniel R.A."/>
            <person name="Denizot F."/>
            <person name="Devine K.M."/>
            <person name="Duesterhoeft A."/>
            <person name="Ehrlich S.D."/>
            <person name="Emmerson P.T."/>
            <person name="Entian K.-D."/>
            <person name="Errington J."/>
            <person name="Fabret C."/>
            <person name="Ferrari E."/>
            <person name="Foulger D."/>
            <person name="Fritz C."/>
            <person name="Fujita M."/>
            <person name="Fujita Y."/>
            <person name="Fuma S."/>
            <person name="Galizzi A."/>
            <person name="Galleron N."/>
            <person name="Ghim S.-Y."/>
            <person name="Glaser P."/>
            <person name="Goffeau A."/>
            <person name="Golightly E.J."/>
            <person name="Grandi G."/>
            <person name="Guiseppi G."/>
            <person name="Guy B.J."/>
            <person name="Haga K."/>
            <person name="Haiech J."/>
            <person name="Harwood C.R."/>
            <person name="Henaut A."/>
            <person name="Hilbert H."/>
            <person name="Holsappel S."/>
            <person name="Hosono S."/>
            <person name="Hullo M.-F."/>
            <person name="Itaya M."/>
            <person name="Jones L.-M."/>
            <person name="Joris B."/>
            <person name="Karamata D."/>
            <person name="Kasahara Y."/>
            <person name="Klaerr-Blanchard M."/>
            <person name="Klein C."/>
            <person name="Kobayashi Y."/>
            <person name="Koetter P."/>
            <person name="Koningstein G."/>
            <person name="Krogh S."/>
            <person name="Kumano M."/>
            <person name="Kurita K."/>
            <person name="Lapidus A."/>
            <person name="Lardinois S."/>
            <person name="Lauber J."/>
            <person name="Lazarevic V."/>
            <person name="Lee S.-M."/>
            <person name="Levine A."/>
            <person name="Liu H."/>
            <person name="Masuda S."/>
            <person name="Mauel C."/>
            <person name="Medigue C."/>
            <person name="Medina N."/>
            <person name="Mellado R.P."/>
            <person name="Mizuno M."/>
            <person name="Moestl D."/>
            <person name="Nakai S."/>
            <person name="Noback M."/>
            <person name="Noone D."/>
            <person name="O'Reilly M."/>
            <person name="Ogawa K."/>
            <person name="Ogiwara A."/>
            <person name="Oudega B."/>
            <person name="Park S.-H."/>
            <person name="Parro V."/>
            <person name="Pohl T.M."/>
            <person name="Portetelle D."/>
            <person name="Porwollik S."/>
            <person name="Prescott A.M."/>
            <person name="Presecan E."/>
            <person name="Pujic P."/>
            <person name="Purnelle B."/>
            <person name="Rapoport G."/>
            <person name="Rey M."/>
            <person name="Reynolds S."/>
            <person name="Rieger M."/>
            <person name="Rivolta C."/>
            <person name="Rocha E."/>
            <person name="Roche B."/>
            <person name="Rose M."/>
            <person name="Sadaie Y."/>
            <person name="Sato T."/>
            <person name="Scanlan E."/>
            <person name="Schleich S."/>
            <person name="Schroeter R."/>
            <person name="Scoffone F."/>
            <person name="Sekiguchi J."/>
            <person name="Sekowska A."/>
            <person name="Seror S.J."/>
            <person name="Serror P."/>
            <person name="Shin B.-S."/>
            <person name="Soldo B."/>
            <person name="Sorokin A."/>
            <person name="Tacconi E."/>
            <person name="Takagi T."/>
            <person name="Takahashi H."/>
            <person name="Takemaru K."/>
            <person name="Takeuchi M."/>
            <person name="Tamakoshi A."/>
            <person name="Tanaka T."/>
            <person name="Terpstra P."/>
            <person name="Tognoni A."/>
            <person name="Tosato V."/>
            <person name="Uchiyama S."/>
            <person name="Vandenbol M."/>
            <person name="Vannier F."/>
            <person name="Vassarotti A."/>
            <person name="Viari A."/>
            <person name="Wambutt R."/>
            <person name="Wedler E."/>
            <person name="Wedler H."/>
            <person name="Weitzenegger T."/>
            <person name="Winters P."/>
            <person name="Wipat A."/>
            <person name="Yamamoto H."/>
            <person name="Yamane K."/>
            <person name="Yasumoto K."/>
            <person name="Yata K."/>
            <person name="Yoshida K."/>
            <person name="Yoshikawa H.-F."/>
            <person name="Zumstein E."/>
            <person name="Yoshikawa H."/>
            <person name="Danchin A."/>
        </authorList>
    </citation>
    <scope>NUCLEOTIDE SEQUENCE [LARGE SCALE GENOMIC DNA]</scope>
    <source>
        <strain>168</strain>
    </source>
</reference>
<reference key="3">
    <citation type="journal article" date="2016" name="Appl. Microbiol. Biotechnol.">
        <title>Identification and characterization of the vanillin dehydrogenase YfmT in Bacillus subtilis 3NA.</title>
        <authorList>
            <person name="Graf N."/>
            <person name="Wenzel M."/>
            <person name="Altenbuchner J."/>
        </authorList>
    </citation>
    <scope>DISRUPTION PHENOTYPE</scope>
    <source>
        <strain>168 / 3NA</strain>
    </source>
</reference>
<gene>
    <name type="primary">dhaS</name>
    <name type="ordered locus">BSU19310</name>
</gene>
<keyword id="KW-0520">NAD</keyword>
<keyword id="KW-0560">Oxidoreductase</keyword>
<keyword id="KW-1185">Reference proteome</keyword>
<organism>
    <name type="scientific">Bacillus subtilis (strain 168)</name>
    <dbReference type="NCBI Taxonomy" id="224308"/>
    <lineage>
        <taxon>Bacteria</taxon>
        <taxon>Bacillati</taxon>
        <taxon>Bacillota</taxon>
        <taxon>Bacilli</taxon>
        <taxon>Bacillales</taxon>
        <taxon>Bacillaceae</taxon>
        <taxon>Bacillus</taxon>
    </lineage>
</organism>
<sequence length="495" mass="53882">MSSLTMQVTKRLETFLQGTKKLYIDGKFVPSASGATFDTPNPATGETLMTLYEAQAADVDKAVKAARKAFDQGEWRTMSPASRSRLMYKLADLMEEHKTELAQLETLDNGKPINETTNGDIPLAIEHMRYYAGWCTKITGQTIPVSGAYFNYTRHEPVGVVGQIIPWNFPLLMAMWKMGAALATGCTIVLKPAEQTPLSALYLAELIDQAGFPAGVINIIPGFGEDAGEALTNHEAVDKIAFTGSTEIGKKIMSTAAKSIKRVTLELGGKSPNILLPDANLKKAIPGALNGVMFNQGQVCCAGSRVFIHKDQYDEVVDEMASYAESLRQGAGLHKDTQIGPLVSKEQHERVLSYIQKGKDEGAKAVTGGSCPFEAGYFVAPTVFANVEDEMTIAKEEIFGPVLTAIPYETVDEVIERANHSEYGLAAGLWTENVKQAHYIADRLQAGTVWVNCYNVFDAASPFGGYKQSGLGREMGSYALDNYTEVKSVWVNLED</sequence>
<accession>O34660</accession>
<accession>Q796C4</accession>
<comment type="catalytic activity">
    <reaction evidence="2">
        <text>an aldehyde + NAD(+) + H2O = a carboxylate + NADH + 2 H(+)</text>
        <dbReference type="Rhea" id="RHEA:16185"/>
        <dbReference type="ChEBI" id="CHEBI:15377"/>
        <dbReference type="ChEBI" id="CHEBI:15378"/>
        <dbReference type="ChEBI" id="CHEBI:17478"/>
        <dbReference type="ChEBI" id="CHEBI:29067"/>
        <dbReference type="ChEBI" id="CHEBI:57540"/>
        <dbReference type="ChEBI" id="CHEBI:57945"/>
        <dbReference type="EC" id="1.2.1.3"/>
    </reaction>
</comment>
<comment type="disruption phenotype">
    <text evidence="3">No effect on vanillin degradation.</text>
</comment>
<comment type="similarity">
    <text evidence="4">Belongs to the aldehyde dehydrogenase family.</text>
</comment>
<dbReference type="EC" id="1.2.1.3" evidence="2"/>
<dbReference type="EMBL" id="AF027868">
    <property type="protein sequence ID" value="AAB84440.1"/>
    <property type="molecule type" value="Genomic_DNA"/>
</dbReference>
<dbReference type="EMBL" id="AL009126">
    <property type="protein sequence ID" value="CAB13823.1"/>
    <property type="molecule type" value="Genomic_DNA"/>
</dbReference>
<dbReference type="PIR" id="H69614">
    <property type="entry name" value="H69614"/>
</dbReference>
<dbReference type="RefSeq" id="NP_389813.1">
    <property type="nucleotide sequence ID" value="NC_000964.3"/>
</dbReference>
<dbReference type="RefSeq" id="WP_004399332.1">
    <property type="nucleotide sequence ID" value="NZ_OZ025638.1"/>
</dbReference>
<dbReference type="SMR" id="O34660"/>
<dbReference type="FunCoup" id="O34660">
    <property type="interactions" value="639"/>
</dbReference>
<dbReference type="STRING" id="224308.BSU19310"/>
<dbReference type="jPOST" id="O34660"/>
<dbReference type="PaxDb" id="224308-BSU19310"/>
<dbReference type="EnsemblBacteria" id="CAB13823">
    <property type="protein sequence ID" value="CAB13823"/>
    <property type="gene ID" value="BSU_19310"/>
</dbReference>
<dbReference type="GeneID" id="939963"/>
<dbReference type="KEGG" id="bsu:BSU19310"/>
<dbReference type="PATRIC" id="fig|224308.179.peg.2112"/>
<dbReference type="eggNOG" id="COG1012">
    <property type="taxonomic scope" value="Bacteria"/>
</dbReference>
<dbReference type="InParanoid" id="O34660"/>
<dbReference type="OrthoDB" id="9762913at2"/>
<dbReference type="PhylomeDB" id="O34660"/>
<dbReference type="BioCyc" id="BSUB:BSU19310-MONOMER"/>
<dbReference type="Proteomes" id="UP000001570">
    <property type="component" value="Chromosome"/>
</dbReference>
<dbReference type="GO" id="GO:0004029">
    <property type="term" value="F:aldehyde dehydrogenase (NAD+) activity"/>
    <property type="evidence" value="ECO:0007669"/>
    <property type="project" value="UniProtKB-EC"/>
</dbReference>
<dbReference type="GO" id="GO:0006081">
    <property type="term" value="P:aldehyde metabolic process"/>
    <property type="evidence" value="ECO:0007669"/>
    <property type="project" value="InterPro"/>
</dbReference>
<dbReference type="CDD" id="cd07091">
    <property type="entry name" value="ALDH_F1-2_Ald2-like"/>
    <property type="match status" value="1"/>
</dbReference>
<dbReference type="FunFam" id="3.40.605.10:FF:000011">
    <property type="entry name" value="ALD5p Mitochondrial aldehyde dehydrogenase"/>
    <property type="match status" value="1"/>
</dbReference>
<dbReference type="FunFam" id="3.40.605.10:FF:000026">
    <property type="entry name" value="Aldehyde dehydrogenase, putative"/>
    <property type="match status" value="1"/>
</dbReference>
<dbReference type="FunFam" id="3.40.309.10:FF:000001">
    <property type="entry name" value="Mitochondrial aldehyde dehydrogenase 2"/>
    <property type="match status" value="1"/>
</dbReference>
<dbReference type="Gene3D" id="3.40.605.10">
    <property type="entry name" value="Aldehyde Dehydrogenase, Chain A, domain 1"/>
    <property type="match status" value="1"/>
</dbReference>
<dbReference type="Gene3D" id="3.40.309.10">
    <property type="entry name" value="Aldehyde Dehydrogenase, Chain A, domain 2"/>
    <property type="match status" value="1"/>
</dbReference>
<dbReference type="InterPro" id="IPR016161">
    <property type="entry name" value="Ald_DH/histidinol_DH"/>
</dbReference>
<dbReference type="InterPro" id="IPR016163">
    <property type="entry name" value="Ald_DH_C"/>
</dbReference>
<dbReference type="InterPro" id="IPR029510">
    <property type="entry name" value="Ald_DH_CS_GLU"/>
</dbReference>
<dbReference type="InterPro" id="IPR016162">
    <property type="entry name" value="Ald_DH_N"/>
</dbReference>
<dbReference type="InterPro" id="IPR015590">
    <property type="entry name" value="Aldehyde_DH_dom"/>
</dbReference>
<dbReference type="InterPro" id="IPR012394">
    <property type="entry name" value="Aldehyde_DH_NAD(P)"/>
</dbReference>
<dbReference type="PANTHER" id="PTHR11699">
    <property type="entry name" value="ALDEHYDE DEHYDROGENASE-RELATED"/>
    <property type="match status" value="1"/>
</dbReference>
<dbReference type="Pfam" id="PF00171">
    <property type="entry name" value="Aldedh"/>
    <property type="match status" value="1"/>
</dbReference>
<dbReference type="PIRSF" id="PIRSF036492">
    <property type="entry name" value="ALDH"/>
    <property type="match status" value="1"/>
</dbReference>
<dbReference type="SUPFAM" id="SSF53720">
    <property type="entry name" value="ALDH-like"/>
    <property type="match status" value="1"/>
</dbReference>
<dbReference type="PROSITE" id="PS00687">
    <property type="entry name" value="ALDEHYDE_DEHYDR_GLU"/>
    <property type="match status" value="1"/>
</dbReference>
<proteinExistence type="inferred from homology"/>